<sequence>MSVISMKQLLEAGVHFGHQTRRWNPKMKRYIFTERNGIYIIDLQKTVKKVEEAFKVMRDIAAEGGDILFVGTKKQAQEAIKEEATRAGMYFVNQRWLGGTLTNFQTIQKRIKRLKDIERMQEDGTFEVLPKKEVVQLKKELERLEKFLGGIKDMKGLPSALFVVDPRKERIAVAEARKLHIPIIGIVDTNCDPDEIDHVIPANDDAIRAVKLLTSKMADAILEAKQGEETVTA</sequence>
<accession>Q81WK8</accession>
<accession>Q6HUQ9</accession>
<accession>Q6KNZ0</accession>
<gene>
    <name evidence="1" type="primary">rpsB</name>
    <name type="ordered locus">BA_3965</name>
    <name type="ordered locus">GBAA_3965</name>
    <name type="ordered locus">BAS3678</name>
</gene>
<proteinExistence type="inferred from homology"/>
<feature type="chain" id="PRO_0000134122" description="Small ribosomal subunit protein uS2">
    <location>
        <begin position="1"/>
        <end position="233"/>
    </location>
</feature>
<reference key="1">
    <citation type="journal article" date="2003" name="Nature">
        <title>The genome sequence of Bacillus anthracis Ames and comparison to closely related bacteria.</title>
        <authorList>
            <person name="Read T.D."/>
            <person name="Peterson S.N."/>
            <person name="Tourasse N.J."/>
            <person name="Baillie L.W."/>
            <person name="Paulsen I.T."/>
            <person name="Nelson K.E."/>
            <person name="Tettelin H."/>
            <person name="Fouts D.E."/>
            <person name="Eisen J.A."/>
            <person name="Gill S.R."/>
            <person name="Holtzapple E.K."/>
            <person name="Okstad O.A."/>
            <person name="Helgason E."/>
            <person name="Rilstone J."/>
            <person name="Wu M."/>
            <person name="Kolonay J.F."/>
            <person name="Beanan M.J."/>
            <person name="Dodson R.J."/>
            <person name="Brinkac L.M."/>
            <person name="Gwinn M.L."/>
            <person name="DeBoy R.T."/>
            <person name="Madpu R."/>
            <person name="Daugherty S.C."/>
            <person name="Durkin A.S."/>
            <person name="Haft D.H."/>
            <person name="Nelson W.C."/>
            <person name="Peterson J.D."/>
            <person name="Pop M."/>
            <person name="Khouri H.M."/>
            <person name="Radune D."/>
            <person name="Benton J.L."/>
            <person name="Mahamoud Y."/>
            <person name="Jiang L."/>
            <person name="Hance I.R."/>
            <person name="Weidman J.F."/>
            <person name="Berry K.J."/>
            <person name="Plaut R.D."/>
            <person name="Wolf A.M."/>
            <person name="Watkins K.L."/>
            <person name="Nierman W.C."/>
            <person name="Hazen A."/>
            <person name="Cline R.T."/>
            <person name="Redmond C."/>
            <person name="Thwaite J.E."/>
            <person name="White O."/>
            <person name="Salzberg S.L."/>
            <person name="Thomason B."/>
            <person name="Friedlander A.M."/>
            <person name="Koehler T.M."/>
            <person name="Hanna P.C."/>
            <person name="Kolstoe A.-B."/>
            <person name="Fraser C.M."/>
        </authorList>
    </citation>
    <scope>NUCLEOTIDE SEQUENCE [LARGE SCALE GENOMIC DNA]</scope>
    <source>
        <strain>Ames / isolate Porton</strain>
    </source>
</reference>
<reference key="2">
    <citation type="journal article" date="2009" name="J. Bacteriol.">
        <title>The complete genome sequence of Bacillus anthracis Ames 'Ancestor'.</title>
        <authorList>
            <person name="Ravel J."/>
            <person name="Jiang L."/>
            <person name="Stanley S.T."/>
            <person name="Wilson M.R."/>
            <person name="Decker R.S."/>
            <person name="Read T.D."/>
            <person name="Worsham P."/>
            <person name="Keim P.S."/>
            <person name="Salzberg S.L."/>
            <person name="Fraser-Liggett C.M."/>
            <person name="Rasko D.A."/>
        </authorList>
    </citation>
    <scope>NUCLEOTIDE SEQUENCE [LARGE SCALE GENOMIC DNA]</scope>
    <source>
        <strain>Ames ancestor</strain>
    </source>
</reference>
<reference key="3">
    <citation type="submission" date="2004-01" db="EMBL/GenBank/DDBJ databases">
        <title>Complete genome sequence of Bacillus anthracis Sterne.</title>
        <authorList>
            <person name="Brettin T.S."/>
            <person name="Bruce D."/>
            <person name="Challacombe J.F."/>
            <person name="Gilna P."/>
            <person name="Han C."/>
            <person name="Hill K."/>
            <person name="Hitchcock P."/>
            <person name="Jackson P."/>
            <person name="Keim P."/>
            <person name="Longmire J."/>
            <person name="Lucas S."/>
            <person name="Okinaka R."/>
            <person name="Richardson P."/>
            <person name="Rubin E."/>
            <person name="Tice H."/>
        </authorList>
    </citation>
    <scope>NUCLEOTIDE SEQUENCE [LARGE SCALE GENOMIC DNA]</scope>
    <source>
        <strain>Sterne</strain>
    </source>
</reference>
<organism>
    <name type="scientific">Bacillus anthracis</name>
    <dbReference type="NCBI Taxonomy" id="1392"/>
    <lineage>
        <taxon>Bacteria</taxon>
        <taxon>Bacillati</taxon>
        <taxon>Bacillota</taxon>
        <taxon>Bacilli</taxon>
        <taxon>Bacillales</taxon>
        <taxon>Bacillaceae</taxon>
        <taxon>Bacillus</taxon>
        <taxon>Bacillus cereus group</taxon>
    </lineage>
</organism>
<evidence type="ECO:0000255" key="1">
    <source>
        <dbReference type="HAMAP-Rule" id="MF_00291"/>
    </source>
</evidence>
<evidence type="ECO:0000305" key="2"/>
<dbReference type="EMBL" id="AE016879">
    <property type="protein sequence ID" value="AAP27694.1"/>
    <property type="molecule type" value="Genomic_DNA"/>
</dbReference>
<dbReference type="EMBL" id="AE017334">
    <property type="protein sequence ID" value="AAT33079.1"/>
    <property type="molecule type" value="Genomic_DNA"/>
</dbReference>
<dbReference type="EMBL" id="AE017225">
    <property type="protein sequence ID" value="AAT55980.1"/>
    <property type="molecule type" value="Genomic_DNA"/>
</dbReference>
<dbReference type="RefSeq" id="NP_846208.1">
    <property type="nucleotide sequence ID" value="NC_003997.3"/>
</dbReference>
<dbReference type="RefSeq" id="WP_000111483.1">
    <property type="nucleotide sequence ID" value="NZ_WXXJ01000026.1"/>
</dbReference>
<dbReference type="RefSeq" id="YP_029929.1">
    <property type="nucleotide sequence ID" value="NC_005945.1"/>
</dbReference>
<dbReference type="SMR" id="Q81WK8"/>
<dbReference type="STRING" id="261594.GBAA_3965"/>
<dbReference type="DNASU" id="1086819"/>
<dbReference type="GeneID" id="75086962"/>
<dbReference type="KEGG" id="ban:BA_3965"/>
<dbReference type="KEGG" id="bar:GBAA_3965"/>
<dbReference type="KEGG" id="bat:BAS3678"/>
<dbReference type="PATRIC" id="fig|198094.11.peg.3935"/>
<dbReference type="eggNOG" id="COG0052">
    <property type="taxonomic scope" value="Bacteria"/>
</dbReference>
<dbReference type="HOGENOM" id="CLU_040318_1_2_9"/>
<dbReference type="OMA" id="PYIFMEK"/>
<dbReference type="OrthoDB" id="9808036at2"/>
<dbReference type="Proteomes" id="UP000000427">
    <property type="component" value="Chromosome"/>
</dbReference>
<dbReference type="Proteomes" id="UP000000594">
    <property type="component" value="Chromosome"/>
</dbReference>
<dbReference type="GO" id="GO:0022627">
    <property type="term" value="C:cytosolic small ribosomal subunit"/>
    <property type="evidence" value="ECO:0007669"/>
    <property type="project" value="TreeGrafter"/>
</dbReference>
<dbReference type="GO" id="GO:0003735">
    <property type="term" value="F:structural constituent of ribosome"/>
    <property type="evidence" value="ECO:0007669"/>
    <property type="project" value="InterPro"/>
</dbReference>
<dbReference type="GO" id="GO:0006412">
    <property type="term" value="P:translation"/>
    <property type="evidence" value="ECO:0007669"/>
    <property type="project" value="UniProtKB-UniRule"/>
</dbReference>
<dbReference type="CDD" id="cd01425">
    <property type="entry name" value="RPS2"/>
    <property type="match status" value="1"/>
</dbReference>
<dbReference type="FunFam" id="1.10.287.610:FF:000001">
    <property type="entry name" value="30S ribosomal protein S2"/>
    <property type="match status" value="1"/>
</dbReference>
<dbReference type="Gene3D" id="3.40.50.10490">
    <property type="entry name" value="Glucose-6-phosphate isomerase like protein, domain 1"/>
    <property type="match status" value="1"/>
</dbReference>
<dbReference type="Gene3D" id="1.10.287.610">
    <property type="entry name" value="Helix hairpin bin"/>
    <property type="match status" value="1"/>
</dbReference>
<dbReference type="HAMAP" id="MF_00291_B">
    <property type="entry name" value="Ribosomal_uS2_B"/>
    <property type="match status" value="1"/>
</dbReference>
<dbReference type="InterPro" id="IPR001865">
    <property type="entry name" value="Ribosomal_uS2"/>
</dbReference>
<dbReference type="InterPro" id="IPR005706">
    <property type="entry name" value="Ribosomal_uS2_bac/mit/plastid"/>
</dbReference>
<dbReference type="InterPro" id="IPR018130">
    <property type="entry name" value="Ribosomal_uS2_CS"/>
</dbReference>
<dbReference type="InterPro" id="IPR023591">
    <property type="entry name" value="Ribosomal_uS2_flav_dom_sf"/>
</dbReference>
<dbReference type="NCBIfam" id="TIGR01011">
    <property type="entry name" value="rpsB_bact"/>
    <property type="match status" value="1"/>
</dbReference>
<dbReference type="PANTHER" id="PTHR12534">
    <property type="entry name" value="30S RIBOSOMAL PROTEIN S2 PROKARYOTIC AND ORGANELLAR"/>
    <property type="match status" value="1"/>
</dbReference>
<dbReference type="PANTHER" id="PTHR12534:SF0">
    <property type="entry name" value="SMALL RIBOSOMAL SUBUNIT PROTEIN US2M"/>
    <property type="match status" value="1"/>
</dbReference>
<dbReference type="Pfam" id="PF00318">
    <property type="entry name" value="Ribosomal_S2"/>
    <property type="match status" value="1"/>
</dbReference>
<dbReference type="PRINTS" id="PR00395">
    <property type="entry name" value="RIBOSOMALS2"/>
</dbReference>
<dbReference type="SUPFAM" id="SSF52313">
    <property type="entry name" value="Ribosomal protein S2"/>
    <property type="match status" value="1"/>
</dbReference>
<dbReference type="PROSITE" id="PS00962">
    <property type="entry name" value="RIBOSOMAL_S2_1"/>
    <property type="match status" value="1"/>
</dbReference>
<dbReference type="PROSITE" id="PS00963">
    <property type="entry name" value="RIBOSOMAL_S2_2"/>
    <property type="match status" value="1"/>
</dbReference>
<comment type="similarity">
    <text evidence="1">Belongs to the universal ribosomal protein uS2 family.</text>
</comment>
<name>RS2_BACAN</name>
<keyword id="KW-1185">Reference proteome</keyword>
<keyword id="KW-0687">Ribonucleoprotein</keyword>
<keyword id="KW-0689">Ribosomal protein</keyword>
<protein>
    <recommendedName>
        <fullName evidence="1">Small ribosomal subunit protein uS2</fullName>
    </recommendedName>
    <alternativeName>
        <fullName evidence="2">30S ribosomal protein S2</fullName>
    </alternativeName>
</protein>